<sequence>MPRTADDSWDIATSVGATAVMVALARAAETASETPLIRDQFAEPLVSTPELAAVREQVAAWWAQTDDDDDPDFTVDSQQMTDYLAVRTHFFDSYFIDAVAAGIRQVVILAAGLDSRAYRLDWPGGTTVYEIDLPKVLDYKEHTLARHGAAPVAALRAVPVDLRHDWPQALRDAGFQTSLPTAWLAEGLLPFLPAAAQHALFTAIDANSATGSRVAVEMFGVDEDARRAAEERAQRWARQRAKRQARGQDTSFDPFDLWFDDEGQPDPADWFAAHGWTTDSVQAGAEALRLGRTAHSQEGPFVNRFVTAGKP</sequence>
<name>Y358_MYCMM</name>
<accession>B2HLS6</accession>
<dbReference type="EC" id="2.1.1.-"/>
<dbReference type="EMBL" id="CP000854">
    <property type="protein sequence ID" value="ACC38825.1"/>
    <property type="molecule type" value="Genomic_DNA"/>
</dbReference>
<dbReference type="RefSeq" id="WP_012392340.1">
    <property type="nucleotide sequence ID" value="NC_010612.1"/>
</dbReference>
<dbReference type="SMR" id="B2HLS6"/>
<dbReference type="STRING" id="216594.MMAR_0358"/>
<dbReference type="KEGG" id="mmi:MMAR_0358"/>
<dbReference type="eggNOG" id="COG3315">
    <property type="taxonomic scope" value="Bacteria"/>
</dbReference>
<dbReference type="HOGENOM" id="CLU_056160_2_1_11"/>
<dbReference type="OrthoDB" id="9806164at2"/>
<dbReference type="Proteomes" id="UP000001190">
    <property type="component" value="Chromosome"/>
</dbReference>
<dbReference type="GO" id="GO:0008168">
    <property type="term" value="F:methyltransferase activity"/>
    <property type="evidence" value="ECO:0007669"/>
    <property type="project" value="UniProtKB-KW"/>
</dbReference>
<dbReference type="GO" id="GO:0032259">
    <property type="term" value="P:methylation"/>
    <property type="evidence" value="ECO:0007669"/>
    <property type="project" value="UniProtKB-KW"/>
</dbReference>
<dbReference type="Gene3D" id="3.40.50.150">
    <property type="entry name" value="Vaccinia Virus protein VP39"/>
    <property type="match status" value="1"/>
</dbReference>
<dbReference type="InterPro" id="IPR007213">
    <property type="entry name" value="Ppm1/Ppm2/Tcmp"/>
</dbReference>
<dbReference type="InterPro" id="IPR029063">
    <property type="entry name" value="SAM-dependent_MTases_sf"/>
</dbReference>
<dbReference type="InterPro" id="IPR011610">
    <property type="entry name" value="SAM_mthyl_Trfase_ML2640-like"/>
</dbReference>
<dbReference type="NCBIfam" id="TIGR00027">
    <property type="entry name" value="mthyl_TIGR00027"/>
    <property type="match status" value="1"/>
</dbReference>
<dbReference type="PANTHER" id="PTHR43619">
    <property type="entry name" value="S-ADENOSYL-L-METHIONINE-DEPENDENT METHYLTRANSFERASE YKTD-RELATED"/>
    <property type="match status" value="1"/>
</dbReference>
<dbReference type="PANTHER" id="PTHR43619:SF2">
    <property type="entry name" value="S-ADENOSYL-L-METHIONINE-DEPENDENT METHYLTRANSFERASES SUPERFAMILY PROTEIN"/>
    <property type="match status" value="1"/>
</dbReference>
<dbReference type="Pfam" id="PF04072">
    <property type="entry name" value="LCM"/>
    <property type="match status" value="1"/>
</dbReference>
<dbReference type="SUPFAM" id="SSF53335">
    <property type="entry name" value="S-adenosyl-L-methionine-dependent methyltransferases"/>
    <property type="match status" value="1"/>
</dbReference>
<evidence type="ECO:0000250" key="1"/>
<evidence type="ECO:0000305" key="2"/>
<organism>
    <name type="scientific">Mycobacterium marinum (strain ATCC BAA-535 / M)</name>
    <dbReference type="NCBI Taxonomy" id="216594"/>
    <lineage>
        <taxon>Bacteria</taxon>
        <taxon>Bacillati</taxon>
        <taxon>Actinomycetota</taxon>
        <taxon>Actinomycetes</taxon>
        <taxon>Mycobacteriales</taxon>
        <taxon>Mycobacteriaceae</taxon>
        <taxon>Mycobacterium</taxon>
        <taxon>Mycobacterium ulcerans group</taxon>
    </lineage>
</organism>
<reference key="1">
    <citation type="journal article" date="2008" name="Genome Res.">
        <title>Insights from the complete genome sequence of Mycobacterium marinum on the evolution of Mycobacterium tuberculosis.</title>
        <authorList>
            <person name="Stinear T.P."/>
            <person name="Seemann T."/>
            <person name="Harrison P.F."/>
            <person name="Jenkin G.A."/>
            <person name="Davies J.K."/>
            <person name="Johnson P.D."/>
            <person name="Abdellah Z."/>
            <person name="Arrowsmith C."/>
            <person name="Chillingworth T."/>
            <person name="Churcher C."/>
            <person name="Clarke K."/>
            <person name="Cronin A."/>
            <person name="Davis P."/>
            <person name="Goodhead I."/>
            <person name="Holroyd N."/>
            <person name="Jagels K."/>
            <person name="Lord A."/>
            <person name="Moule S."/>
            <person name="Mungall K."/>
            <person name="Norbertczak H."/>
            <person name="Quail M.A."/>
            <person name="Rabbinowitsch E."/>
            <person name="Walker D."/>
            <person name="White B."/>
            <person name="Whitehead S."/>
            <person name="Small P.L."/>
            <person name="Brosch R."/>
            <person name="Ramakrishnan L."/>
            <person name="Fischbach M.A."/>
            <person name="Parkhill J."/>
            <person name="Cole S.T."/>
        </authorList>
    </citation>
    <scope>NUCLEOTIDE SEQUENCE [LARGE SCALE GENOMIC DNA]</scope>
    <source>
        <strain>ATCC BAA-535 / M</strain>
    </source>
</reference>
<proteinExistence type="inferred from homology"/>
<keyword id="KW-0489">Methyltransferase</keyword>
<keyword id="KW-1185">Reference proteome</keyword>
<keyword id="KW-0949">S-adenosyl-L-methionine</keyword>
<keyword id="KW-0808">Transferase</keyword>
<gene>
    <name type="ordered locus">MMAR_0358</name>
</gene>
<protein>
    <recommendedName>
        <fullName>Putative S-adenosyl-L-methionine-dependent methyltransferase MMAR_0358</fullName>
        <ecNumber>2.1.1.-</ecNumber>
    </recommendedName>
</protein>
<comment type="function">
    <text evidence="1">Exhibits S-adenosyl-L-methionine-dependent methyltransferase activity.</text>
</comment>
<comment type="similarity">
    <text evidence="2">Belongs to the UPF0677 family.</text>
</comment>
<feature type="chain" id="PRO_0000361170" description="Putative S-adenosyl-L-methionine-dependent methyltransferase MMAR_0358">
    <location>
        <begin position="1"/>
        <end position="311"/>
    </location>
</feature>
<feature type="binding site" evidence="1">
    <location>
        <position position="132"/>
    </location>
    <ligand>
        <name>S-adenosyl-L-methionine</name>
        <dbReference type="ChEBI" id="CHEBI:59789"/>
    </ligand>
</feature>
<feature type="binding site" evidence="1">
    <location>
        <begin position="161"/>
        <end position="162"/>
    </location>
    <ligand>
        <name>S-adenosyl-L-methionine</name>
        <dbReference type="ChEBI" id="CHEBI:59789"/>
    </ligand>
</feature>